<proteinExistence type="inferred from homology"/>
<evidence type="ECO:0000255" key="1">
    <source>
        <dbReference type="HAMAP-Rule" id="MF_00278"/>
    </source>
</evidence>
<dbReference type="EC" id="4.3.2.10" evidence="1"/>
<dbReference type="EC" id="3.5.1.2" evidence="1"/>
<dbReference type="EMBL" id="AE017125">
    <property type="protein sequence ID" value="AAP77082.1"/>
    <property type="molecule type" value="Genomic_DNA"/>
</dbReference>
<dbReference type="RefSeq" id="WP_011115327.1">
    <property type="nucleotide sequence ID" value="NC_004917.1"/>
</dbReference>
<dbReference type="SMR" id="Q7VIW9"/>
<dbReference type="STRING" id="235279.HH_0485"/>
<dbReference type="KEGG" id="hhe:HH_0485"/>
<dbReference type="eggNOG" id="COG0118">
    <property type="taxonomic scope" value="Bacteria"/>
</dbReference>
<dbReference type="HOGENOM" id="CLU_071837_2_0_7"/>
<dbReference type="OrthoDB" id="9807749at2"/>
<dbReference type="UniPathway" id="UPA00031">
    <property type="reaction ID" value="UER00010"/>
</dbReference>
<dbReference type="Proteomes" id="UP000002495">
    <property type="component" value="Chromosome"/>
</dbReference>
<dbReference type="GO" id="GO:0005737">
    <property type="term" value="C:cytoplasm"/>
    <property type="evidence" value="ECO:0007669"/>
    <property type="project" value="UniProtKB-SubCell"/>
</dbReference>
<dbReference type="GO" id="GO:0004359">
    <property type="term" value="F:glutaminase activity"/>
    <property type="evidence" value="ECO:0007669"/>
    <property type="project" value="UniProtKB-EC"/>
</dbReference>
<dbReference type="GO" id="GO:0000107">
    <property type="term" value="F:imidazoleglycerol-phosphate synthase activity"/>
    <property type="evidence" value="ECO:0007669"/>
    <property type="project" value="UniProtKB-UniRule"/>
</dbReference>
<dbReference type="GO" id="GO:0016829">
    <property type="term" value="F:lyase activity"/>
    <property type="evidence" value="ECO:0007669"/>
    <property type="project" value="UniProtKB-KW"/>
</dbReference>
<dbReference type="GO" id="GO:0000105">
    <property type="term" value="P:L-histidine biosynthetic process"/>
    <property type="evidence" value="ECO:0007669"/>
    <property type="project" value="UniProtKB-UniRule"/>
</dbReference>
<dbReference type="CDD" id="cd01748">
    <property type="entry name" value="GATase1_IGP_Synthase"/>
    <property type="match status" value="1"/>
</dbReference>
<dbReference type="Gene3D" id="3.40.50.880">
    <property type="match status" value="1"/>
</dbReference>
<dbReference type="HAMAP" id="MF_00278">
    <property type="entry name" value="HisH"/>
    <property type="match status" value="1"/>
</dbReference>
<dbReference type="InterPro" id="IPR029062">
    <property type="entry name" value="Class_I_gatase-like"/>
</dbReference>
<dbReference type="InterPro" id="IPR017926">
    <property type="entry name" value="GATASE"/>
</dbReference>
<dbReference type="InterPro" id="IPR010139">
    <property type="entry name" value="Imidazole-glycPsynth_HisH"/>
</dbReference>
<dbReference type="NCBIfam" id="TIGR01855">
    <property type="entry name" value="IMP_synth_hisH"/>
    <property type="match status" value="1"/>
</dbReference>
<dbReference type="PANTHER" id="PTHR42701">
    <property type="entry name" value="IMIDAZOLE GLYCEROL PHOSPHATE SYNTHASE SUBUNIT HISH"/>
    <property type="match status" value="1"/>
</dbReference>
<dbReference type="PANTHER" id="PTHR42701:SF1">
    <property type="entry name" value="IMIDAZOLE GLYCEROL PHOSPHATE SYNTHASE SUBUNIT HISH"/>
    <property type="match status" value="1"/>
</dbReference>
<dbReference type="Pfam" id="PF00117">
    <property type="entry name" value="GATase"/>
    <property type="match status" value="1"/>
</dbReference>
<dbReference type="PIRSF" id="PIRSF000495">
    <property type="entry name" value="Amidotransf_hisH"/>
    <property type="match status" value="1"/>
</dbReference>
<dbReference type="SUPFAM" id="SSF52317">
    <property type="entry name" value="Class I glutamine amidotransferase-like"/>
    <property type="match status" value="1"/>
</dbReference>
<dbReference type="PROSITE" id="PS51273">
    <property type="entry name" value="GATASE_TYPE_1"/>
    <property type="match status" value="1"/>
</dbReference>
<accession>Q7VIW9</accession>
<protein>
    <recommendedName>
        <fullName evidence="1">Imidazole glycerol phosphate synthase subunit HisH</fullName>
        <ecNumber evidence="1">4.3.2.10</ecNumber>
    </recommendedName>
    <alternativeName>
        <fullName evidence="1">IGP synthase glutaminase subunit</fullName>
        <ecNumber evidence="1">3.5.1.2</ecNumber>
    </alternativeName>
    <alternativeName>
        <fullName evidence="1">IGP synthase subunit HisH</fullName>
    </alternativeName>
    <alternativeName>
        <fullName evidence="1">ImGP synthase subunit HisH</fullName>
        <shortName evidence="1">IGPS subunit HisH</shortName>
    </alternativeName>
</protein>
<organism>
    <name type="scientific">Helicobacter hepaticus (strain ATCC 51449 / 3B1)</name>
    <dbReference type="NCBI Taxonomy" id="235279"/>
    <lineage>
        <taxon>Bacteria</taxon>
        <taxon>Pseudomonadati</taxon>
        <taxon>Campylobacterota</taxon>
        <taxon>Epsilonproteobacteria</taxon>
        <taxon>Campylobacterales</taxon>
        <taxon>Helicobacteraceae</taxon>
        <taxon>Helicobacter</taxon>
    </lineage>
</organism>
<reference key="1">
    <citation type="journal article" date="2003" name="Proc. Natl. Acad. Sci. U.S.A.">
        <title>The complete genome sequence of the carcinogenic bacterium Helicobacter hepaticus.</title>
        <authorList>
            <person name="Suerbaum S."/>
            <person name="Josenhans C."/>
            <person name="Sterzenbach T."/>
            <person name="Drescher B."/>
            <person name="Brandt P."/>
            <person name="Bell M."/>
            <person name="Droege M."/>
            <person name="Fartmann B."/>
            <person name="Fischer H.-P."/>
            <person name="Ge Z."/>
            <person name="Hoerster A."/>
            <person name="Holland R."/>
            <person name="Klein K."/>
            <person name="Koenig J."/>
            <person name="Macko L."/>
            <person name="Mendz G.L."/>
            <person name="Nyakatura G."/>
            <person name="Schauer D.B."/>
            <person name="Shen Z."/>
            <person name="Weber J."/>
            <person name="Frosch M."/>
            <person name="Fox J.G."/>
        </authorList>
    </citation>
    <scope>NUCLEOTIDE SEQUENCE [LARGE SCALE GENOMIC DNA]</scope>
    <source>
        <strain>ATCC 51449 / 3B1</strain>
    </source>
</reference>
<comment type="function">
    <text evidence="1">IGPS catalyzes the conversion of PRFAR and glutamine to IGP, AICAR and glutamate. The HisH subunit catalyzes the hydrolysis of glutamine to glutamate and ammonia as part of the synthesis of IGP and AICAR. The resulting ammonia molecule is channeled to the active site of HisF.</text>
</comment>
<comment type="catalytic activity">
    <reaction evidence="1">
        <text>5-[(5-phospho-1-deoxy-D-ribulos-1-ylimino)methylamino]-1-(5-phospho-beta-D-ribosyl)imidazole-4-carboxamide + L-glutamine = D-erythro-1-(imidazol-4-yl)glycerol 3-phosphate + 5-amino-1-(5-phospho-beta-D-ribosyl)imidazole-4-carboxamide + L-glutamate + H(+)</text>
        <dbReference type="Rhea" id="RHEA:24793"/>
        <dbReference type="ChEBI" id="CHEBI:15378"/>
        <dbReference type="ChEBI" id="CHEBI:29985"/>
        <dbReference type="ChEBI" id="CHEBI:58278"/>
        <dbReference type="ChEBI" id="CHEBI:58359"/>
        <dbReference type="ChEBI" id="CHEBI:58475"/>
        <dbReference type="ChEBI" id="CHEBI:58525"/>
        <dbReference type="EC" id="4.3.2.10"/>
    </reaction>
</comment>
<comment type="catalytic activity">
    <reaction evidence="1">
        <text>L-glutamine + H2O = L-glutamate + NH4(+)</text>
        <dbReference type="Rhea" id="RHEA:15889"/>
        <dbReference type="ChEBI" id="CHEBI:15377"/>
        <dbReference type="ChEBI" id="CHEBI:28938"/>
        <dbReference type="ChEBI" id="CHEBI:29985"/>
        <dbReference type="ChEBI" id="CHEBI:58359"/>
        <dbReference type="EC" id="3.5.1.2"/>
    </reaction>
</comment>
<comment type="pathway">
    <text evidence="1">Amino-acid biosynthesis; L-histidine biosynthesis; L-histidine from 5-phospho-alpha-D-ribose 1-diphosphate: step 5/9.</text>
</comment>
<comment type="subunit">
    <text evidence="1">Heterodimer of HisH and HisF.</text>
</comment>
<comment type="subcellular location">
    <subcellularLocation>
        <location evidence="1">Cytoplasm</location>
    </subcellularLocation>
</comment>
<keyword id="KW-0028">Amino-acid biosynthesis</keyword>
<keyword id="KW-0963">Cytoplasm</keyword>
<keyword id="KW-0315">Glutamine amidotransferase</keyword>
<keyword id="KW-0368">Histidine biosynthesis</keyword>
<keyword id="KW-0378">Hydrolase</keyword>
<keyword id="KW-0456">Lyase</keyword>
<keyword id="KW-1185">Reference proteome</keyword>
<feature type="chain" id="PRO_0000152380" description="Imidazole glycerol phosphate synthase subunit HisH">
    <location>
        <begin position="1"/>
        <end position="217"/>
    </location>
</feature>
<feature type="domain" description="Glutamine amidotransferase type-1" evidence="1">
    <location>
        <begin position="5"/>
        <end position="217"/>
    </location>
</feature>
<feature type="active site" description="Nucleophile" evidence="1">
    <location>
        <position position="93"/>
    </location>
</feature>
<feature type="active site" evidence="1">
    <location>
        <position position="199"/>
    </location>
</feature>
<feature type="active site" evidence="1">
    <location>
        <position position="201"/>
    </location>
</feature>
<gene>
    <name evidence="1" type="primary">hisH</name>
    <name type="ordered locus">HH_0485</name>
</gene>
<name>HIS5_HELHP</name>
<sequence>MSKLRVGIINYGVGNLGSVQNAFAFIQTHFSDVLPHTLEIKVESHPERLQDYDKLLLPGVGAFGNAMTHLKNTHLDEAIREFVQSGKFLIGICLGMQLLFEQSEEFGNHKGLGLIEGKVVGFEHIAPLKVPHIGWNSCNFTPEGKHSKLFRGIADGSFFYFVHSFHIQTQPQFILAQCTYGYPFGAIVHKDNLFAIQAHPEKSHNVGLRLLANFLTL</sequence>